<evidence type="ECO:0000250" key="1"/>
<evidence type="ECO:0000255" key="2">
    <source>
        <dbReference type="PROSITE-ProRule" id="PRU00107"/>
    </source>
</evidence>
<evidence type="ECO:0000255" key="3">
    <source>
        <dbReference type="PROSITE-ProRule" id="PRU00140"/>
    </source>
</evidence>
<evidence type="ECO:0000255" key="4">
    <source>
        <dbReference type="PROSITE-ProRule" id="PRU00141"/>
    </source>
</evidence>
<evidence type="ECO:0000255" key="5">
    <source>
        <dbReference type="PROSITE-ProRule" id="PRU00169"/>
    </source>
</evidence>
<feature type="chain" id="PRO_0000361294" description="Blue-light-activated protein">
    <location>
        <begin position="1"/>
        <end position="534"/>
    </location>
</feature>
<feature type="domain" description="PAS" evidence="3">
    <location>
        <begin position="20"/>
        <end position="93"/>
    </location>
</feature>
<feature type="domain" description="PAC" evidence="4">
    <location>
        <begin position="94"/>
        <end position="148"/>
    </location>
</feature>
<feature type="domain" description="Histidine kinase" evidence="2">
    <location>
        <begin position="161"/>
        <end position="390"/>
    </location>
</feature>
<feature type="domain" description="Response regulatory" evidence="5">
    <location>
        <begin position="411"/>
        <end position="527"/>
    </location>
</feature>
<feature type="modified residue" description="S-4a-FMN cysteine" evidence="1">
    <location>
        <position position="70"/>
    </location>
</feature>
<feature type="modified residue" description="Phosphohistidine; by autocatalysis" evidence="2">
    <location>
        <position position="164"/>
    </location>
</feature>
<feature type="modified residue" description="4-aspartylphosphate" evidence="5">
    <location>
        <position position="461"/>
    </location>
</feature>
<proteinExistence type="inferred from homology"/>
<comment type="function">
    <text evidence="1">Photosensitive kinase and response regulator that is involved in increased bacterial virulence upon exposure to light.</text>
</comment>
<comment type="catalytic activity">
    <reaction>
        <text>ATP + protein L-histidine = ADP + protein N-phospho-L-histidine.</text>
        <dbReference type="EC" id="2.7.13.3"/>
    </reaction>
</comment>
<comment type="PTM">
    <text evidence="1">FMN binds covalently to cysteine after exposure to blue light and this bond is spontaneously broken in the dark.</text>
</comment>
<organism>
    <name type="scientific">Pseudomonas syringae pv. syringae (strain B728a)</name>
    <dbReference type="NCBI Taxonomy" id="205918"/>
    <lineage>
        <taxon>Bacteria</taxon>
        <taxon>Pseudomonadati</taxon>
        <taxon>Pseudomonadota</taxon>
        <taxon>Gammaproteobacteria</taxon>
        <taxon>Pseudomonadales</taxon>
        <taxon>Pseudomonadaceae</taxon>
        <taxon>Pseudomonas</taxon>
        <taxon>Pseudomonas syringae</taxon>
    </lineage>
</organism>
<keyword id="KW-0067">ATP-binding</keyword>
<keyword id="KW-0157">Chromophore</keyword>
<keyword id="KW-0285">Flavoprotein</keyword>
<keyword id="KW-0288">FMN</keyword>
<keyword id="KW-0418">Kinase</keyword>
<keyword id="KW-0547">Nucleotide-binding</keyword>
<keyword id="KW-0597">Phosphoprotein</keyword>
<keyword id="KW-0600">Photoreceptor protein</keyword>
<keyword id="KW-0675">Receptor</keyword>
<keyword id="KW-0716">Sensory transduction</keyword>
<keyword id="KW-0808">Transferase</keyword>
<keyword id="KW-0843">Virulence</keyword>
<name>LOVHK_PSEU2</name>
<accession>Q4ZSY3</accession>
<protein>
    <recommendedName>
        <fullName>Blue-light-activated protein</fullName>
    </recommendedName>
    <domain>
        <recommendedName>
            <fullName>Blue-light-activated histidine kinase</fullName>
            <ecNumber>2.7.13.3</ecNumber>
        </recommendedName>
    </domain>
    <domain>
        <recommendedName>
            <fullName>Response regulator</fullName>
        </recommendedName>
    </domain>
</protein>
<reference key="1">
    <citation type="journal article" date="2005" name="Proc. Natl. Acad. Sci. U.S.A.">
        <title>Comparison of the complete genome sequences of Pseudomonas syringae pv. syringae B728a and pv. tomato DC3000.</title>
        <authorList>
            <person name="Feil H."/>
            <person name="Feil W.S."/>
            <person name="Chain P."/>
            <person name="Larimer F."/>
            <person name="Dibartolo G."/>
            <person name="Copeland A."/>
            <person name="Lykidis A."/>
            <person name="Trong S."/>
            <person name="Nolan M."/>
            <person name="Goltsman E."/>
            <person name="Thiel J."/>
            <person name="Malfatti S."/>
            <person name="Loper J.E."/>
            <person name="Lapidus A."/>
            <person name="Detter J.C."/>
            <person name="Land M."/>
            <person name="Richardson P.M."/>
            <person name="Kyrpides N.C."/>
            <person name="Ivanova N."/>
            <person name="Lindow S.E."/>
        </authorList>
    </citation>
    <scope>NUCLEOTIDE SEQUENCE [LARGE SCALE GENOMIC DNA]</scope>
    <source>
        <strain>B728a</strain>
    </source>
</reference>
<sequence>MSENKTRVDNAATGDIKHQGKDIFFAAVETTRMPMIVTDPNRPDNPIIFANRAFLEMTGYASEEIIGSNCRFLQGPDTDRTAVQSIRDAIDQRVDISTEILNYRKDGSSFWNALFISPVYNDAGELIYFFASQLDISRRRDAEEALRQAQKMEALGQLTGGIAHDFNNLLQVMGGYIDLIGSAAEKPVIDVQRVQRSVHHAKSAVERASTLTKQLLAFARKQKLQGRVLNLNGLVSTTEPLIERTFGPEVIIETDLDPALKNCRIDPTQAEVALLNIFINARDALIGRLNPKIFIETRNLVVDELANMSYDGLLPGRYVSIAVTDNGIGMPASIRDRVMDPFFTTKEEGKGSGLGLSMVYGFAKQSGGAARIYTEEGVGTTLRLYFPVDEAVLSKNDPPKASERRIGSSERILIVEDRPDVAELAKMVLDDYGYVSEIVLNAREALKRFEAGATYDLLFTDLIMPGGMNGVMLAREVRRRFPKVKVLLTTGYAESSIERTDIGGSEFEVVSKPCMPQDLARKVRQVLDGPNGIA</sequence>
<dbReference type="EC" id="2.7.13.3"/>
<dbReference type="EMBL" id="CP000075">
    <property type="protein sequence ID" value="AAY37739.1"/>
    <property type="molecule type" value="Genomic_DNA"/>
</dbReference>
<dbReference type="RefSeq" id="WP_011267901.1">
    <property type="nucleotide sequence ID" value="NC_007005.1"/>
</dbReference>
<dbReference type="RefSeq" id="YP_235777.1">
    <property type="nucleotide sequence ID" value="NC_007005.1"/>
</dbReference>
<dbReference type="SMR" id="Q4ZSY3"/>
<dbReference type="STRING" id="205918.Psyr_2700"/>
<dbReference type="KEGG" id="psb:Psyr_2700"/>
<dbReference type="PATRIC" id="fig|205918.7.peg.2760"/>
<dbReference type="eggNOG" id="COG0784">
    <property type="taxonomic scope" value="Bacteria"/>
</dbReference>
<dbReference type="eggNOG" id="COG4191">
    <property type="taxonomic scope" value="Bacteria"/>
</dbReference>
<dbReference type="HOGENOM" id="CLU_000445_114_51_6"/>
<dbReference type="OrthoDB" id="9772100at2"/>
<dbReference type="PHI-base" id="PHI:7700"/>
<dbReference type="Proteomes" id="UP000000426">
    <property type="component" value="Chromosome"/>
</dbReference>
<dbReference type="GO" id="GO:0005524">
    <property type="term" value="F:ATP binding"/>
    <property type="evidence" value="ECO:0007669"/>
    <property type="project" value="UniProtKB-KW"/>
</dbReference>
<dbReference type="GO" id="GO:0000155">
    <property type="term" value="F:phosphorelay sensor kinase activity"/>
    <property type="evidence" value="ECO:0007669"/>
    <property type="project" value="InterPro"/>
</dbReference>
<dbReference type="GO" id="GO:0009881">
    <property type="term" value="F:photoreceptor activity"/>
    <property type="evidence" value="ECO:0007669"/>
    <property type="project" value="UniProtKB-KW"/>
</dbReference>
<dbReference type="CDD" id="cd16919">
    <property type="entry name" value="HATPase_CckA-like"/>
    <property type="match status" value="1"/>
</dbReference>
<dbReference type="CDD" id="cd00082">
    <property type="entry name" value="HisKA"/>
    <property type="match status" value="1"/>
</dbReference>
<dbReference type="CDD" id="cd00130">
    <property type="entry name" value="PAS"/>
    <property type="match status" value="1"/>
</dbReference>
<dbReference type="CDD" id="cd18161">
    <property type="entry name" value="REC_hyHK_blue-like"/>
    <property type="match status" value="1"/>
</dbReference>
<dbReference type="Gene3D" id="1.10.287.130">
    <property type="match status" value="1"/>
</dbReference>
<dbReference type="Gene3D" id="3.40.50.2300">
    <property type="match status" value="1"/>
</dbReference>
<dbReference type="Gene3D" id="3.30.565.10">
    <property type="entry name" value="Histidine kinase-like ATPase, C-terminal domain"/>
    <property type="match status" value="1"/>
</dbReference>
<dbReference type="Gene3D" id="3.30.450.20">
    <property type="entry name" value="PAS domain"/>
    <property type="match status" value="1"/>
</dbReference>
<dbReference type="InterPro" id="IPR011006">
    <property type="entry name" value="CheY-like_superfamily"/>
</dbReference>
<dbReference type="InterPro" id="IPR036890">
    <property type="entry name" value="HATPase_C_sf"/>
</dbReference>
<dbReference type="InterPro" id="IPR005467">
    <property type="entry name" value="His_kinase_dom"/>
</dbReference>
<dbReference type="InterPro" id="IPR003661">
    <property type="entry name" value="HisK_dim/P_dom"/>
</dbReference>
<dbReference type="InterPro" id="IPR036097">
    <property type="entry name" value="HisK_dim/P_sf"/>
</dbReference>
<dbReference type="InterPro" id="IPR001610">
    <property type="entry name" value="PAC"/>
</dbReference>
<dbReference type="InterPro" id="IPR000014">
    <property type="entry name" value="PAS"/>
</dbReference>
<dbReference type="InterPro" id="IPR000700">
    <property type="entry name" value="PAS-assoc_C"/>
</dbReference>
<dbReference type="InterPro" id="IPR035965">
    <property type="entry name" value="PAS-like_dom_sf"/>
</dbReference>
<dbReference type="InterPro" id="IPR004358">
    <property type="entry name" value="Sig_transdc_His_kin-like_C"/>
</dbReference>
<dbReference type="InterPro" id="IPR001789">
    <property type="entry name" value="Sig_transdc_resp-reg_receiver"/>
</dbReference>
<dbReference type="NCBIfam" id="NF010076">
    <property type="entry name" value="PRK13557.1"/>
    <property type="match status" value="1"/>
</dbReference>
<dbReference type="NCBIfam" id="TIGR00229">
    <property type="entry name" value="sensory_box"/>
    <property type="match status" value="1"/>
</dbReference>
<dbReference type="PANTHER" id="PTHR43065">
    <property type="entry name" value="SENSOR HISTIDINE KINASE"/>
    <property type="match status" value="1"/>
</dbReference>
<dbReference type="PANTHER" id="PTHR43065:SF42">
    <property type="entry name" value="TWO-COMPONENT SENSOR PPRA"/>
    <property type="match status" value="1"/>
</dbReference>
<dbReference type="Pfam" id="PF02518">
    <property type="entry name" value="HATPase_c"/>
    <property type="match status" value="1"/>
</dbReference>
<dbReference type="Pfam" id="PF13426">
    <property type="entry name" value="PAS_9"/>
    <property type="match status" value="1"/>
</dbReference>
<dbReference type="Pfam" id="PF00072">
    <property type="entry name" value="Response_reg"/>
    <property type="match status" value="1"/>
</dbReference>
<dbReference type="PRINTS" id="PR00344">
    <property type="entry name" value="BCTRLSENSOR"/>
</dbReference>
<dbReference type="SMART" id="SM00387">
    <property type="entry name" value="HATPase_c"/>
    <property type="match status" value="1"/>
</dbReference>
<dbReference type="SMART" id="SM00388">
    <property type="entry name" value="HisKA"/>
    <property type="match status" value="1"/>
</dbReference>
<dbReference type="SMART" id="SM00086">
    <property type="entry name" value="PAC"/>
    <property type="match status" value="1"/>
</dbReference>
<dbReference type="SMART" id="SM00091">
    <property type="entry name" value="PAS"/>
    <property type="match status" value="1"/>
</dbReference>
<dbReference type="SMART" id="SM00448">
    <property type="entry name" value="REC"/>
    <property type="match status" value="1"/>
</dbReference>
<dbReference type="SUPFAM" id="SSF55874">
    <property type="entry name" value="ATPase domain of HSP90 chaperone/DNA topoisomerase II/histidine kinase"/>
    <property type="match status" value="1"/>
</dbReference>
<dbReference type="SUPFAM" id="SSF52172">
    <property type="entry name" value="CheY-like"/>
    <property type="match status" value="1"/>
</dbReference>
<dbReference type="SUPFAM" id="SSF47384">
    <property type="entry name" value="Homodimeric domain of signal transducing histidine kinase"/>
    <property type="match status" value="1"/>
</dbReference>
<dbReference type="SUPFAM" id="SSF55785">
    <property type="entry name" value="PYP-like sensor domain (PAS domain)"/>
    <property type="match status" value="1"/>
</dbReference>
<dbReference type="PROSITE" id="PS50109">
    <property type="entry name" value="HIS_KIN"/>
    <property type="match status" value="1"/>
</dbReference>
<dbReference type="PROSITE" id="PS50113">
    <property type="entry name" value="PAC"/>
    <property type="match status" value="1"/>
</dbReference>
<dbReference type="PROSITE" id="PS50112">
    <property type="entry name" value="PAS"/>
    <property type="match status" value="1"/>
</dbReference>
<dbReference type="PROSITE" id="PS50110">
    <property type="entry name" value="RESPONSE_REGULATORY"/>
    <property type="match status" value="1"/>
</dbReference>
<gene>
    <name type="ordered locus">Psyr_2700</name>
</gene>